<name>PSAC_THAPS</name>
<protein>
    <recommendedName>
        <fullName evidence="2">Photosystem I iron-sulfur center</fullName>
        <ecNumber evidence="2">1.97.1.12</ecNumber>
    </recommendedName>
    <alternativeName>
        <fullName evidence="2">9 kDa polypeptide</fullName>
    </alternativeName>
    <alternativeName>
        <fullName evidence="2">PSI-C</fullName>
    </alternativeName>
    <alternativeName>
        <fullName evidence="2">Photosystem I subunit VII</fullName>
    </alternativeName>
    <alternativeName>
        <fullName evidence="2">PsaC</fullName>
    </alternativeName>
</protein>
<geneLocation type="chloroplast"/>
<comment type="function">
    <text>Apoprotein for the two 4Fe-4S centers FA and FB of photosystem I (PSI); essential for photochemical activity. FB is the terminal electron acceptor of PSI, donating electrons to ferredoxin. The C-terminus interacts with PsaA/B/D and helps assemble the protein into the PSI complex. Required for binding of PsaD and PsaE to PSI. PSI is a plastocyanin/cytochrome c6-ferredoxin oxidoreductase, converting photonic excitation into a charge separation, which transfers an electron from the donor P700 chlorophyll pair to the spectroscopically characterized acceptors A0, A1, FX, FA and FB in turn.</text>
</comment>
<comment type="catalytic activity">
    <reaction evidence="2">
        <text>reduced [plastocyanin] + hnu + oxidized [2Fe-2S]-[ferredoxin] = oxidized [plastocyanin] + reduced [2Fe-2S]-[ferredoxin]</text>
        <dbReference type="Rhea" id="RHEA:30407"/>
        <dbReference type="Rhea" id="RHEA-COMP:10000"/>
        <dbReference type="Rhea" id="RHEA-COMP:10001"/>
        <dbReference type="Rhea" id="RHEA-COMP:10039"/>
        <dbReference type="Rhea" id="RHEA-COMP:10040"/>
        <dbReference type="ChEBI" id="CHEBI:29036"/>
        <dbReference type="ChEBI" id="CHEBI:30212"/>
        <dbReference type="ChEBI" id="CHEBI:33737"/>
        <dbReference type="ChEBI" id="CHEBI:33738"/>
        <dbReference type="ChEBI" id="CHEBI:49552"/>
        <dbReference type="EC" id="1.97.1.12"/>
    </reaction>
</comment>
<comment type="cofactor">
    <cofactor evidence="2">
        <name>[4Fe-4S] cluster</name>
        <dbReference type="ChEBI" id="CHEBI:49883"/>
    </cofactor>
    <text evidence="2">Binds 2 [4Fe-4S] clusters. Cluster 2 is most probably the spectroscopically characterized electron acceptor FA and cluster 1 is most probably FB.</text>
</comment>
<comment type="subunit">
    <text evidence="2">The eukaryotic PSI reaction center is composed of at least 11 subunits.</text>
</comment>
<comment type="subcellular location">
    <subcellularLocation>
        <location evidence="2">Plastid</location>
        <location evidence="2">Chloroplast thylakoid membrane</location>
        <topology evidence="2">Peripheral membrane protein</topology>
        <orientation evidence="2">Stromal side</orientation>
    </subcellularLocation>
</comment>
<keyword id="KW-0002">3D-structure</keyword>
<keyword id="KW-0004">4Fe-4S</keyword>
<keyword id="KW-0150">Chloroplast</keyword>
<keyword id="KW-0249">Electron transport</keyword>
<keyword id="KW-0408">Iron</keyword>
<keyword id="KW-0411">Iron-sulfur</keyword>
<keyword id="KW-0472">Membrane</keyword>
<keyword id="KW-0479">Metal-binding</keyword>
<keyword id="KW-0560">Oxidoreductase</keyword>
<keyword id="KW-0602">Photosynthesis</keyword>
<keyword id="KW-0603">Photosystem I</keyword>
<keyword id="KW-0934">Plastid</keyword>
<keyword id="KW-0677">Repeat</keyword>
<keyword id="KW-0793">Thylakoid</keyword>
<keyword id="KW-0813">Transport</keyword>
<reference key="1">
    <citation type="journal article" date="2007" name="Mol. Genet. Genomics">
        <title>Chloroplast genomes of the diatoms Phaeodactylum tricornutum and Thalassiosira pseudonana: comparison with other plastid genomes of the red lineage.</title>
        <authorList>
            <person name="Oudot-Le Secq M.-P."/>
            <person name="Grimwood J."/>
            <person name="Shapiro H."/>
            <person name="Armbrust E.V."/>
            <person name="Bowler C."/>
            <person name="Green B.R."/>
        </authorList>
    </citation>
    <scope>NUCLEOTIDE SEQUENCE [LARGE SCALE GENOMIC DNA]</scope>
    <source>
        <strain>CCMP1335 / NEPCC58 / CCAP 1085/12</strain>
    </source>
</reference>
<accession>A0T0W4</accession>
<gene>
    <name evidence="2" type="primary">psaC</name>
</gene>
<sequence length="81" mass="8798">MSHTVKIYDTCIGCTQCVRACPTDVLEMVPWDGCKSGQIASSPRVEDCVGCKRCETACPTDFLSVRVYLGAETTRSLGLAY</sequence>
<dbReference type="EC" id="1.97.1.12" evidence="2"/>
<dbReference type="EMBL" id="EF067921">
    <property type="protein sequence ID" value="ABK20799.1"/>
    <property type="molecule type" value="Genomic_DNA"/>
</dbReference>
<dbReference type="EMBL" id="EF067921">
    <property type="protein sequence ID" value="ABK20841.1"/>
    <property type="molecule type" value="Genomic_DNA"/>
</dbReference>
<dbReference type="RefSeq" id="YP_874576.1">
    <property type="nucleotide sequence ID" value="NC_008589.1"/>
</dbReference>
<dbReference type="RefSeq" id="YP_874618.1">
    <property type="nucleotide sequence ID" value="NC_008589.1"/>
</dbReference>
<dbReference type="PDB" id="8ZEH">
    <property type="method" value="EM"/>
    <property type="resolution" value="2.78 A"/>
    <property type="chains" value="c=2-81"/>
</dbReference>
<dbReference type="PDB" id="8ZET">
    <property type="method" value="EM"/>
    <property type="resolution" value="3.20 A"/>
    <property type="chains" value="c=2-81"/>
</dbReference>
<dbReference type="PDBsum" id="8ZEH"/>
<dbReference type="PDBsum" id="8ZET"/>
<dbReference type="EMDB" id="EMD-38457"/>
<dbReference type="EMDB" id="EMD-60032"/>
<dbReference type="EMDB" id="EMD-60044"/>
<dbReference type="SMR" id="A0T0W4"/>
<dbReference type="STRING" id="35128.A0T0W4"/>
<dbReference type="PaxDb" id="35128-Thapsdraft1048"/>
<dbReference type="GeneID" id="4524820"/>
<dbReference type="GeneID" id="4524893"/>
<dbReference type="eggNOG" id="ENOG502S26M">
    <property type="taxonomic scope" value="Eukaryota"/>
</dbReference>
<dbReference type="InParanoid" id="A0T0W4"/>
<dbReference type="OMA" id="GHMSHAV"/>
<dbReference type="GO" id="GO:0009535">
    <property type="term" value="C:chloroplast thylakoid membrane"/>
    <property type="evidence" value="ECO:0007669"/>
    <property type="project" value="UniProtKB-SubCell"/>
</dbReference>
<dbReference type="GO" id="GO:0009522">
    <property type="term" value="C:photosystem I"/>
    <property type="evidence" value="ECO:0007669"/>
    <property type="project" value="UniProtKB-KW"/>
</dbReference>
<dbReference type="GO" id="GO:0051539">
    <property type="term" value="F:4 iron, 4 sulfur cluster binding"/>
    <property type="evidence" value="ECO:0007669"/>
    <property type="project" value="UniProtKB-KW"/>
</dbReference>
<dbReference type="GO" id="GO:0009055">
    <property type="term" value="F:electron transfer activity"/>
    <property type="evidence" value="ECO:0007669"/>
    <property type="project" value="UniProtKB-UniRule"/>
</dbReference>
<dbReference type="GO" id="GO:0046872">
    <property type="term" value="F:metal ion binding"/>
    <property type="evidence" value="ECO:0007669"/>
    <property type="project" value="UniProtKB-KW"/>
</dbReference>
<dbReference type="GO" id="GO:0016491">
    <property type="term" value="F:oxidoreductase activity"/>
    <property type="evidence" value="ECO:0007669"/>
    <property type="project" value="UniProtKB-KW"/>
</dbReference>
<dbReference type="GO" id="GO:0009773">
    <property type="term" value="P:photosynthetic electron transport in photosystem I"/>
    <property type="evidence" value="ECO:0007669"/>
    <property type="project" value="InterPro"/>
</dbReference>
<dbReference type="FunFam" id="3.30.70.20:FF:000001">
    <property type="entry name" value="Photosystem I iron-sulfur center"/>
    <property type="match status" value="1"/>
</dbReference>
<dbReference type="Gene3D" id="3.30.70.20">
    <property type="match status" value="1"/>
</dbReference>
<dbReference type="HAMAP" id="MF_01303">
    <property type="entry name" value="PSI_PsaC"/>
    <property type="match status" value="1"/>
</dbReference>
<dbReference type="InterPro" id="IPR017896">
    <property type="entry name" value="4Fe4S_Fe-S-bd"/>
</dbReference>
<dbReference type="InterPro" id="IPR017900">
    <property type="entry name" value="4Fe4S_Fe_S_CS"/>
</dbReference>
<dbReference type="InterPro" id="IPR050157">
    <property type="entry name" value="PSI_iron-sulfur_center"/>
</dbReference>
<dbReference type="InterPro" id="IPR017491">
    <property type="entry name" value="PSI_PsaC"/>
</dbReference>
<dbReference type="NCBIfam" id="TIGR03048">
    <property type="entry name" value="PS_I_psaC"/>
    <property type="match status" value="1"/>
</dbReference>
<dbReference type="PANTHER" id="PTHR24960:SF79">
    <property type="entry name" value="PHOTOSYSTEM I IRON-SULFUR CENTER"/>
    <property type="match status" value="1"/>
</dbReference>
<dbReference type="PANTHER" id="PTHR24960">
    <property type="entry name" value="PHOTOSYSTEM I IRON-SULFUR CENTER-RELATED"/>
    <property type="match status" value="1"/>
</dbReference>
<dbReference type="Pfam" id="PF12838">
    <property type="entry name" value="Fer4_7"/>
    <property type="match status" value="1"/>
</dbReference>
<dbReference type="SUPFAM" id="SSF54862">
    <property type="entry name" value="4Fe-4S ferredoxins"/>
    <property type="match status" value="1"/>
</dbReference>
<dbReference type="PROSITE" id="PS00198">
    <property type="entry name" value="4FE4S_FER_1"/>
    <property type="match status" value="2"/>
</dbReference>
<dbReference type="PROSITE" id="PS51379">
    <property type="entry name" value="4FE4S_FER_2"/>
    <property type="match status" value="2"/>
</dbReference>
<feature type="initiator methionine" description="Removed" evidence="1">
    <location>
        <position position="1"/>
    </location>
</feature>
<feature type="chain" id="PRO_0000276010" description="Photosystem I iron-sulfur center">
    <location>
        <begin position="2"/>
        <end position="81"/>
    </location>
</feature>
<feature type="domain" description="4Fe-4S ferredoxin-type 1" evidence="2">
    <location>
        <begin position="2"/>
        <end position="31"/>
    </location>
</feature>
<feature type="domain" description="4Fe-4S ferredoxin-type 2" evidence="2">
    <location>
        <begin position="37"/>
        <end position="68"/>
    </location>
</feature>
<feature type="binding site" evidence="2">
    <location>
        <position position="11"/>
    </location>
    <ligand>
        <name>[4Fe-4S] cluster</name>
        <dbReference type="ChEBI" id="CHEBI:49883"/>
        <label>1</label>
    </ligand>
</feature>
<feature type="binding site" evidence="2">
    <location>
        <position position="14"/>
    </location>
    <ligand>
        <name>[4Fe-4S] cluster</name>
        <dbReference type="ChEBI" id="CHEBI:49883"/>
        <label>1</label>
    </ligand>
</feature>
<feature type="binding site" evidence="2">
    <location>
        <position position="17"/>
    </location>
    <ligand>
        <name>[4Fe-4S] cluster</name>
        <dbReference type="ChEBI" id="CHEBI:49883"/>
        <label>1</label>
    </ligand>
</feature>
<feature type="binding site" evidence="2">
    <location>
        <position position="21"/>
    </location>
    <ligand>
        <name>[4Fe-4S] cluster</name>
        <dbReference type="ChEBI" id="CHEBI:49883"/>
        <label>2</label>
    </ligand>
</feature>
<feature type="binding site" evidence="2">
    <location>
        <position position="48"/>
    </location>
    <ligand>
        <name>[4Fe-4S] cluster</name>
        <dbReference type="ChEBI" id="CHEBI:49883"/>
        <label>2</label>
    </ligand>
</feature>
<feature type="binding site" evidence="2">
    <location>
        <position position="51"/>
    </location>
    <ligand>
        <name>[4Fe-4S] cluster</name>
        <dbReference type="ChEBI" id="CHEBI:49883"/>
        <label>2</label>
    </ligand>
</feature>
<feature type="binding site" evidence="2">
    <location>
        <position position="54"/>
    </location>
    <ligand>
        <name>[4Fe-4S] cluster</name>
        <dbReference type="ChEBI" id="CHEBI:49883"/>
        <label>2</label>
    </ligand>
</feature>
<feature type="binding site" evidence="2">
    <location>
        <position position="58"/>
    </location>
    <ligand>
        <name>[4Fe-4S] cluster</name>
        <dbReference type="ChEBI" id="CHEBI:49883"/>
        <label>1</label>
    </ligand>
</feature>
<evidence type="ECO:0000250" key="1"/>
<evidence type="ECO:0000255" key="2">
    <source>
        <dbReference type="HAMAP-Rule" id="MF_01303"/>
    </source>
</evidence>
<proteinExistence type="evidence at protein level"/>
<organism>
    <name type="scientific">Thalassiosira pseudonana</name>
    <name type="common">Marine diatom</name>
    <name type="synonym">Cyclotella nana</name>
    <dbReference type="NCBI Taxonomy" id="35128"/>
    <lineage>
        <taxon>Eukaryota</taxon>
        <taxon>Sar</taxon>
        <taxon>Stramenopiles</taxon>
        <taxon>Ochrophyta</taxon>
        <taxon>Bacillariophyta</taxon>
        <taxon>Coscinodiscophyceae</taxon>
        <taxon>Thalassiosirophycidae</taxon>
        <taxon>Thalassiosirales</taxon>
        <taxon>Thalassiosiraceae</taxon>
        <taxon>Thalassiosira</taxon>
    </lineage>
</organism>